<gene>
    <name type="primary">rps7-A</name>
</gene>
<gene>
    <name type="primary">rps7-B</name>
</gene>
<organism>
    <name type="scientific">Helianthus annuus</name>
    <name type="common">Common sunflower</name>
    <dbReference type="NCBI Taxonomy" id="4232"/>
    <lineage>
        <taxon>Eukaryota</taxon>
        <taxon>Viridiplantae</taxon>
        <taxon>Streptophyta</taxon>
        <taxon>Embryophyta</taxon>
        <taxon>Tracheophyta</taxon>
        <taxon>Spermatophyta</taxon>
        <taxon>Magnoliopsida</taxon>
        <taxon>eudicotyledons</taxon>
        <taxon>Gunneridae</taxon>
        <taxon>Pentapetalae</taxon>
        <taxon>asterids</taxon>
        <taxon>campanulids</taxon>
        <taxon>Asterales</taxon>
        <taxon>Asteraceae</taxon>
        <taxon>Asteroideae</taxon>
        <taxon>Heliantheae alliance</taxon>
        <taxon>Heliantheae</taxon>
        <taxon>Helianthus</taxon>
    </lineage>
</organism>
<dbReference type="EMBL" id="DQ383815">
    <property type="protein sequence ID" value="ABD47191.1"/>
    <property type="molecule type" value="Genomic_DNA"/>
</dbReference>
<dbReference type="EMBL" id="DQ383815">
    <property type="protein sequence ID" value="ABD47207.1"/>
    <property type="molecule type" value="Genomic_DNA"/>
</dbReference>
<dbReference type="SMR" id="Q1KXP8"/>
<dbReference type="EnsemblPlants" id="mRNA:HanXRQr2_Chr13g0602231">
    <property type="protein sequence ID" value="CDS:HanXRQr2_Chr13g0602231.1"/>
    <property type="gene ID" value="HanXRQr2_Chr13g0602231"/>
</dbReference>
<dbReference type="EnsemblPlants" id="mRNA:HanXRQr2_Chr13g0602321">
    <property type="protein sequence ID" value="CDS:HanXRQr2_Chr13g0602321.1"/>
    <property type="gene ID" value="HanXRQr2_Chr13g0602321"/>
</dbReference>
<dbReference type="Gramene" id="mRNA:HanXRQr2_Chr13g0602231">
    <property type="protein sequence ID" value="CDS:HanXRQr2_Chr13g0602231.1"/>
    <property type="gene ID" value="HanXRQr2_Chr13g0602231"/>
</dbReference>
<dbReference type="Gramene" id="mRNA:HanXRQr2_Chr13g0602321">
    <property type="protein sequence ID" value="CDS:HanXRQr2_Chr13g0602321.1"/>
    <property type="gene ID" value="HanXRQr2_Chr13g0602321"/>
</dbReference>
<dbReference type="KEGG" id="han:4055599"/>
<dbReference type="KEGG" id="han:4055650"/>
<dbReference type="OrthoDB" id="35139at2759"/>
<dbReference type="PhylomeDB" id="Q1KXP8"/>
<dbReference type="GO" id="GO:0009507">
    <property type="term" value="C:chloroplast"/>
    <property type="evidence" value="ECO:0007669"/>
    <property type="project" value="UniProtKB-SubCell"/>
</dbReference>
<dbReference type="GO" id="GO:0015935">
    <property type="term" value="C:small ribosomal subunit"/>
    <property type="evidence" value="ECO:0007669"/>
    <property type="project" value="InterPro"/>
</dbReference>
<dbReference type="GO" id="GO:0019843">
    <property type="term" value="F:rRNA binding"/>
    <property type="evidence" value="ECO:0007669"/>
    <property type="project" value="UniProtKB-UniRule"/>
</dbReference>
<dbReference type="GO" id="GO:0003735">
    <property type="term" value="F:structural constituent of ribosome"/>
    <property type="evidence" value="ECO:0007669"/>
    <property type="project" value="InterPro"/>
</dbReference>
<dbReference type="GO" id="GO:0006412">
    <property type="term" value="P:translation"/>
    <property type="evidence" value="ECO:0007669"/>
    <property type="project" value="UniProtKB-UniRule"/>
</dbReference>
<dbReference type="CDD" id="cd14871">
    <property type="entry name" value="uS7_Chloroplast"/>
    <property type="match status" value="1"/>
</dbReference>
<dbReference type="FunFam" id="1.10.455.10:FF:000001">
    <property type="entry name" value="30S ribosomal protein S7"/>
    <property type="match status" value="1"/>
</dbReference>
<dbReference type="Gene3D" id="1.10.455.10">
    <property type="entry name" value="Ribosomal protein S7 domain"/>
    <property type="match status" value="1"/>
</dbReference>
<dbReference type="HAMAP" id="MF_00480_B">
    <property type="entry name" value="Ribosomal_uS7_B"/>
    <property type="match status" value="1"/>
</dbReference>
<dbReference type="InterPro" id="IPR000235">
    <property type="entry name" value="Ribosomal_uS7"/>
</dbReference>
<dbReference type="InterPro" id="IPR005717">
    <property type="entry name" value="Ribosomal_uS7_bac/org-type"/>
</dbReference>
<dbReference type="InterPro" id="IPR020606">
    <property type="entry name" value="Ribosomal_uS7_CS"/>
</dbReference>
<dbReference type="InterPro" id="IPR023798">
    <property type="entry name" value="Ribosomal_uS7_dom"/>
</dbReference>
<dbReference type="InterPro" id="IPR036823">
    <property type="entry name" value="Ribosomal_uS7_dom_sf"/>
</dbReference>
<dbReference type="NCBIfam" id="TIGR01029">
    <property type="entry name" value="rpsG_bact"/>
    <property type="match status" value="1"/>
</dbReference>
<dbReference type="PANTHER" id="PTHR11205">
    <property type="entry name" value="RIBOSOMAL PROTEIN S7"/>
    <property type="match status" value="1"/>
</dbReference>
<dbReference type="Pfam" id="PF00177">
    <property type="entry name" value="Ribosomal_S7"/>
    <property type="match status" value="1"/>
</dbReference>
<dbReference type="PIRSF" id="PIRSF002122">
    <property type="entry name" value="RPS7p_RPS7a_RPS5e_RPS7o"/>
    <property type="match status" value="1"/>
</dbReference>
<dbReference type="SUPFAM" id="SSF47973">
    <property type="entry name" value="Ribosomal protein S7"/>
    <property type="match status" value="1"/>
</dbReference>
<dbReference type="PROSITE" id="PS00052">
    <property type="entry name" value="RIBOSOMAL_S7"/>
    <property type="match status" value="1"/>
</dbReference>
<keyword id="KW-0150">Chloroplast</keyword>
<keyword id="KW-0934">Plastid</keyword>
<keyword id="KW-0687">Ribonucleoprotein</keyword>
<keyword id="KW-0689">Ribosomal protein</keyword>
<keyword id="KW-0694">RNA-binding</keyword>
<keyword id="KW-0699">rRNA-binding</keyword>
<protein>
    <recommendedName>
        <fullName evidence="2">Small ribosomal subunit protein uS7cz/uS7cy</fullName>
    </recommendedName>
    <alternativeName>
        <fullName>30S ribosomal protein S7, chloroplastic</fullName>
    </alternativeName>
</protein>
<accession>Q1KXP8</accession>
<geneLocation type="chloroplast"/>
<feature type="chain" id="PRO_0000277042" description="Small ribosomal subunit protein uS7cz/uS7cy">
    <location>
        <begin position="1"/>
        <end position="155"/>
    </location>
</feature>
<name>RR7_HELAN</name>
<sequence>MSRRGTAEEKTAKSDPIYRNRLVNMLVNRILKHGKKSLAYQIIYRAVKKIQQKTETNPLSVLRQAIHGVTPGIAVKARRVGGSTHQVPIEIGSTQGKALAIRWLLAASRKRPGRNMAFKLSSELVDAAKGSGDAIRKREETHRMAEANRAFAHFR</sequence>
<proteinExistence type="inferred from homology"/>
<evidence type="ECO:0000250" key="1"/>
<evidence type="ECO:0000255" key="2">
    <source>
        <dbReference type="HAMAP-Rule" id="MF_00480"/>
    </source>
</evidence>
<evidence type="ECO:0000305" key="3"/>
<reference key="1">
    <citation type="submission" date="2006-01" db="EMBL/GenBank/DDBJ databases">
        <title>A comparison of the first two published chloroplast genomes in Asteraceae: Lactuca and Helianthus.</title>
        <authorList>
            <person name="Timme R.E."/>
            <person name="Kuehl J.V."/>
            <person name="Boore J.L."/>
            <person name="Jansen R.K."/>
        </authorList>
    </citation>
    <scope>NUCLEOTIDE SEQUENCE [LARGE SCALE GENOMIC DNA]</scope>
    <source>
        <strain>cv. HA383</strain>
    </source>
</reference>
<comment type="function">
    <text evidence="1">One of the primary rRNA binding proteins, it binds directly to 16S rRNA where it nucleates assembly of the head domain of the 30S subunit.</text>
</comment>
<comment type="subunit">
    <text>Part of the 30S ribosomal subunit.</text>
</comment>
<comment type="subcellular location">
    <subcellularLocation>
        <location>Plastid</location>
        <location>Chloroplast</location>
    </subcellularLocation>
</comment>
<comment type="similarity">
    <text evidence="3">Belongs to the universal ribosomal protein uS7 family.</text>
</comment>